<gene>
    <name evidence="1" type="primary">rpsC</name>
    <name type="ordered locus">ECIAI1_3463</name>
</gene>
<dbReference type="EMBL" id="CU928160">
    <property type="protein sequence ID" value="CAR00265.1"/>
    <property type="molecule type" value="Genomic_DNA"/>
</dbReference>
<dbReference type="RefSeq" id="WP_000529945.1">
    <property type="nucleotide sequence ID" value="NC_011741.1"/>
</dbReference>
<dbReference type="SMR" id="B7M1M8"/>
<dbReference type="GeneID" id="97603663"/>
<dbReference type="KEGG" id="ecr:ECIAI1_3463"/>
<dbReference type="HOGENOM" id="CLU_058591_0_2_6"/>
<dbReference type="GO" id="GO:0022627">
    <property type="term" value="C:cytosolic small ribosomal subunit"/>
    <property type="evidence" value="ECO:0007669"/>
    <property type="project" value="TreeGrafter"/>
</dbReference>
<dbReference type="GO" id="GO:0003729">
    <property type="term" value="F:mRNA binding"/>
    <property type="evidence" value="ECO:0007669"/>
    <property type="project" value="UniProtKB-UniRule"/>
</dbReference>
<dbReference type="GO" id="GO:0019843">
    <property type="term" value="F:rRNA binding"/>
    <property type="evidence" value="ECO:0007669"/>
    <property type="project" value="UniProtKB-UniRule"/>
</dbReference>
<dbReference type="GO" id="GO:0003735">
    <property type="term" value="F:structural constituent of ribosome"/>
    <property type="evidence" value="ECO:0007669"/>
    <property type="project" value="InterPro"/>
</dbReference>
<dbReference type="GO" id="GO:0006412">
    <property type="term" value="P:translation"/>
    <property type="evidence" value="ECO:0007669"/>
    <property type="project" value="UniProtKB-UniRule"/>
</dbReference>
<dbReference type="CDD" id="cd02412">
    <property type="entry name" value="KH-II_30S_S3"/>
    <property type="match status" value="1"/>
</dbReference>
<dbReference type="FunFam" id="3.30.1140.32:FF:000001">
    <property type="entry name" value="30S ribosomal protein S3"/>
    <property type="match status" value="1"/>
</dbReference>
<dbReference type="FunFam" id="3.30.300.20:FF:000001">
    <property type="entry name" value="30S ribosomal protein S3"/>
    <property type="match status" value="1"/>
</dbReference>
<dbReference type="Gene3D" id="3.30.300.20">
    <property type="match status" value="1"/>
</dbReference>
<dbReference type="Gene3D" id="3.30.1140.32">
    <property type="entry name" value="Ribosomal protein S3, C-terminal domain"/>
    <property type="match status" value="1"/>
</dbReference>
<dbReference type="HAMAP" id="MF_01309_B">
    <property type="entry name" value="Ribosomal_uS3_B"/>
    <property type="match status" value="1"/>
</dbReference>
<dbReference type="InterPro" id="IPR004087">
    <property type="entry name" value="KH_dom"/>
</dbReference>
<dbReference type="InterPro" id="IPR015946">
    <property type="entry name" value="KH_dom-like_a/b"/>
</dbReference>
<dbReference type="InterPro" id="IPR004044">
    <property type="entry name" value="KH_dom_type_2"/>
</dbReference>
<dbReference type="InterPro" id="IPR009019">
    <property type="entry name" value="KH_sf_prok-type"/>
</dbReference>
<dbReference type="InterPro" id="IPR036419">
    <property type="entry name" value="Ribosomal_S3_C_sf"/>
</dbReference>
<dbReference type="InterPro" id="IPR005704">
    <property type="entry name" value="Ribosomal_uS3_bac-typ"/>
</dbReference>
<dbReference type="InterPro" id="IPR001351">
    <property type="entry name" value="Ribosomal_uS3_C"/>
</dbReference>
<dbReference type="InterPro" id="IPR018280">
    <property type="entry name" value="Ribosomal_uS3_CS"/>
</dbReference>
<dbReference type="NCBIfam" id="TIGR01009">
    <property type="entry name" value="rpsC_bact"/>
    <property type="match status" value="1"/>
</dbReference>
<dbReference type="PANTHER" id="PTHR11760">
    <property type="entry name" value="30S/40S RIBOSOMAL PROTEIN S3"/>
    <property type="match status" value="1"/>
</dbReference>
<dbReference type="PANTHER" id="PTHR11760:SF19">
    <property type="entry name" value="SMALL RIBOSOMAL SUBUNIT PROTEIN US3C"/>
    <property type="match status" value="1"/>
</dbReference>
<dbReference type="Pfam" id="PF07650">
    <property type="entry name" value="KH_2"/>
    <property type="match status" value="1"/>
</dbReference>
<dbReference type="Pfam" id="PF00189">
    <property type="entry name" value="Ribosomal_S3_C"/>
    <property type="match status" value="1"/>
</dbReference>
<dbReference type="SMART" id="SM00322">
    <property type="entry name" value="KH"/>
    <property type="match status" value="1"/>
</dbReference>
<dbReference type="SUPFAM" id="SSF54814">
    <property type="entry name" value="Prokaryotic type KH domain (KH-domain type II)"/>
    <property type="match status" value="1"/>
</dbReference>
<dbReference type="SUPFAM" id="SSF54821">
    <property type="entry name" value="Ribosomal protein S3 C-terminal domain"/>
    <property type="match status" value="1"/>
</dbReference>
<dbReference type="PROSITE" id="PS50823">
    <property type="entry name" value="KH_TYPE_2"/>
    <property type="match status" value="1"/>
</dbReference>
<dbReference type="PROSITE" id="PS00548">
    <property type="entry name" value="RIBOSOMAL_S3"/>
    <property type="match status" value="1"/>
</dbReference>
<sequence length="233" mass="25983">MGQKVHPNGIRLGIVKPWNSTWFANTKEFADNLDSDFKVRQYLTKELAKASVSRIVIERPAKSIRVTIHTARPGIVIGKKGEDVEKLRKVVADIAGVPAQINIAEVRKPELDAKLVADSITSQLERRVMFRRAMKRAVQNAMRLGAKGIKVEVSGRLGGAEIARTEWYREGRVPLHTLRADIDYNTSEAHTTYGVIGVKVWIFKGEILGGMAAVEQPEKPAAQPKKQQRKGRK</sequence>
<comment type="function">
    <text evidence="1">Binds the lower part of the 30S subunit head. Binds mRNA in the 70S ribosome, positioning it for translation.</text>
</comment>
<comment type="subunit">
    <text evidence="1">Part of the 30S ribosomal subunit. Forms a tight complex with proteins S10 and S14.</text>
</comment>
<comment type="similarity">
    <text evidence="1">Belongs to the universal ribosomal protein uS3 family.</text>
</comment>
<keyword id="KW-0687">Ribonucleoprotein</keyword>
<keyword id="KW-0689">Ribosomal protein</keyword>
<keyword id="KW-0694">RNA-binding</keyword>
<keyword id="KW-0699">rRNA-binding</keyword>
<name>RS3_ECO8A</name>
<organism>
    <name type="scientific">Escherichia coli O8 (strain IAI1)</name>
    <dbReference type="NCBI Taxonomy" id="585034"/>
    <lineage>
        <taxon>Bacteria</taxon>
        <taxon>Pseudomonadati</taxon>
        <taxon>Pseudomonadota</taxon>
        <taxon>Gammaproteobacteria</taxon>
        <taxon>Enterobacterales</taxon>
        <taxon>Enterobacteriaceae</taxon>
        <taxon>Escherichia</taxon>
    </lineage>
</organism>
<protein>
    <recommendedName>
        <fullName evidence="1">Small ribosomal subunit protein uS3</fullName>
    </recommendedName>
    <alternativeName>
        <fullName evidence="2">30S ribosomal protein S3</fullName>
    </alternativeName>
</protein>
<feature type="chain" id="PRO_1000140963" description="Small ribosomal subunit protein uS3">
    <location>
        <begin position="1"/>
        <end position="233"/>
    </location>
</feature>
<feature type="domain" description="KH type-2" evidence="1">
    <location>
        <begin position="39"/>
        <end position="107"/>
    </location>
</feature>
<evidence type="ECO:0000255" key="1">
    <source>
        <dbReference type="HAMAP-Rule" id="MF_01309"/>
    </source>
</evidence>
<evidence type="ECO:0000305" key="2"/>
<reference key="1">
    <citation type="journal article" date="2009" name="PLoS Genet.">
        <title>Organised genome dynamics in the Escherichia coli species results in highly diverse adaptive paths.</title>
        <authorList>
            <person name="Touchon M."/>
            <person name="Hoede C."/>
            <person name="Tenaillon O."/>
            <person name="Barbe V."/>
            <person name="Baeriswyl S."/>
            <person name="Bidet P."/>
            <person name="Bingen E."/>
            <person name="Bonacorsi S."/>
            <person name="Bouchier C."/>
            <person name="Bouvet O."/>
            <person name="Calteau A."/>
            <person name="Chiapello H."/>
            <person name="Clermont O."/>
            <person name="Cruveiller S."/>
            <person name="Danchin A."/>
            <person name="Diard M."/>
            <person name="Dossat C."/>
            <person name="Karoui M.E."/>
            <person name="Frapy E."/>
            <person name="Garry L."/>
            <person name="Ghigo J.M."/>
            <person name="Gilles A.M."/>
            <person name="Johnson J."/>
            <person name="Le Bouguenec C."/>
            <person name="Lescat M."/>
            <person name="Mangenot S."/>
            <person name="Martinez-Jehanne V."/>
            <person name="Matic I."/>
            <person name="Nassif X."/>
            <person name="Oztas S."/>
            <person name="Petit M.A."/>
            <person name="Pichon C."/>
            <person name="Rouy Z."/>
            <person name="Ruf C.S."/>
            <person name="Schneider D."/>
            <person name="Tourret J."/>
            <person name="Vacherie B."/>
            <person name="Vallenet D."/>
            <person name="Medigue C."/>
            <person name="Rocha E.P.C."/>
            <person name="Denamur E."/>
        </authorList>
    </citation>
    <scope>NUCLEOTIDE SEQUENCE [LARGE SCALE GENOMIC DNA]</scope>
    <source>
        <strain>IAI1</strain>
    </source>
</reference>
<proteinExistence type="inferred from homology"/>
<accession>B7M1M8</accession>